<evidence type="ECO:0000255" key="1"/>
<evidence type="ECO:0000256" key="2">
    <source>
        <dbReference type="SAM" id="MobiDB-lite"/>
    </source>
</evidence>
<evidence type="ECO:0000305" key="3"/>
<feature type="signal peptide" evidence="1">
    <location>
        <begin position="1"/>
        <end position="25"/>
    </location>
</feature>
<feature type="chain" id="PRO_5000314164" description="Putative outer membrane porin BglH">
    <location>
        <begin position="26"/>
        <end position="538"/>
    </location>
</feature>
<feature type="region of interest" description="Disordered" evidence="2">
    <location>
        <begin position="52"/>
        <end position="82"/>
    </location>
</feature>
<feature type="compositionally biased region" description="Polar residues" evidence="2">
    <location>
        <begin position="62"/>
        <end position="73"/>
    </location>
</feature>
<protein>
    <recommendedName>
        <fullName>Putative outer membrane porin BglH</fullName>
    </recommendedName>
</protein>
<comment type="function">
    <text evidence="3">May be a sugar porin with a broad carbohydrate specificity.</text>
</comment>
<comment type="subcellular location">
    <subcellularLocation>
        <location evidence="3">Cell outer membrane</location>
        <topology evidence="3">Multi-pass membrane protein</topology>
    </subcellularLocation>
</comment>
<comment type="similarity">
    <text evidence="3">Belongs to the porin LamB (TC 1.B.3) family.</text>
</comment>
<name>BGLH_ECOLC</name>
<organism>
    <name type="scientific">Escherichia coli (strain ATCC 8739 / DSM 1576 / NBRC 3972 / NCIMB 8545 / WDCM 00012 / Crooks)</name>
    <dbReference type="NCBI Taxonomy" id="481805"/>
    <lineage>
        <taxon>Bacteria</taxon>
        <taxon>Pseudomonadati</taxon>
        <taxon>Pseudomonadota</taxon>
        <taxon>Gammaproteobacteria</taxon>
        <taxon>Enterobacterales</taxon>
        <taxon>Enterobacteriaceae</taxon>
        <taxon>Escherichia</taxon>
    </lineage>
</organism>
<accession>B1IX18</accession>
<reference key="1">
    <citation type="submission" date="2008-02" db="EMBL/GenBank/DDBJ databases">
        <title>Complete sequence of Escherichia coli C str. ATCC 8739.</title>
        <authorList>
            <person name="Copeland A."/>
            <person name="Lucas S."/>
            <person name="Lapidus A."/>
            <person name="Glavina del Rio T."/>
            <person name="Dalin E."/>
            <person name="Tice H."/>
            <person name="Bruce D."/>
            <person name="Goodwin L."/>
            <person name="Pitluck S."/>
            <person name="Kiss H."/>
            <person name="Brettin T."/>
            <person name="Detter J.C."/>
            <person name="Han C."/>
            <person name="Kuske C.R."/>
            <person name="Schmutz J."/>
            <person name="Larimer F."/>
            <person name="Land M."/>
            <person name="Hauser L."/>
            <person name="Kyrpides N."/>
            <person name="Mikhailova N."/>
            <person name="Ingram L."/>
            <person name="Richardson P."/>
        </authorList>
    </citation>
    <scope>NUCLEOTIDE SEQUENCE [LARGE SCALE GENOMIC DNA]</scope>
    <source>
        <strain>ATCC 8739 / DSM 1576 / NBRC 3972 / NCIMB 8545 / WDCM 00012 / Crooks</strain>
    </source>
</reference>
<proteinExistence type="inferred from homology"/>
<sequence>MFRRNLITSAILLMAPLAFSAQSLAESLTVEQRLELLEKALRETQSELKKYKDEEKKKYTPATVNRSVSTNDQGYAANPFPTSSAAKPDAVLVKNEEKNASETGSIYSSMTLKDFSKFVKDEIGFSYNGYYRSGWGTASHGSPKSWAIGSLGRFGNEYSGWFDLQLKQRVYNENGKRVDAVVMMDGNVGQQYSTGWFGDNAGGENYMQFSDMYVTTKGFLPFAPEADFWVGKHGAPKIEIQMLDWKTQRTDAAAGVGLENWKVGPGKIDIALVREDVDDYDRSLQNKQQINTNTIDLRYKDIPLWDKATLMVSGRYVTANESASEKDNQDNNGYYDWKDTWMFGTSLTQKFDKGGFNEFSFLVANNSIASNFGRYAGASPFTTFNGRYYGDHTGGTAVRLTSQGEAYIGDHFIVANAIVYSFGNDIYSYETGAHSDFESIRAVVRPAYIWDQYNQTGVELGYFTQQNKDANSNKFNESGYKTTLFHTFKVNTSMLTSRPEIRFYATYIKALENELDGFTFEDNKDDQFAVGAQAEIWW</sequence>
<gene>
    <name type="primary">bglH</name>
    <name type="ordered locus">EcolC_4274</name>
</gene>
<dbReference type="EMBL" id="CP000946">
    <property type="protein sequence ID" value="ACA79870.1"/>
    <property type="molecule type" value="Genomic_DNA"/>
</dbReference>
<dbReference type="RefSeq" id="WP_000489881.1">
    <property type="nucleotide sequence ID" value="NZ_MTFT01000013.1"/>
</dbReference>
<dbReference type="SMR" id="B1IX18"/>
<dbReference type="KEGG" id="ecl:EcolC_4274"/>
<dbReference type="HOGENOM" id="CLU_032473_2_1_6"/>
<dbReference type="GO" id="GO:0009279">
    <property type="term" value="C:cell outer membrane"/>
    <property type="evidence" value="ECO:0007669"/>
    <property type="project" value="UniProtKB-SubCell"/>
</dbReference>
<dbReference type="GO" id="GO:0046930">
    <property type="term" value="C:pore complex"/>
    <property type="evidence" value="ECO:0007669"/>
    <property type="project" value="UniProtKB-KW"/>
</dbReference>
<dbReference type="GO" id="GO:0015144">
    <property type="term" value="F:carbohydrate transmembrane transporter activity"/>
    <property type="evidence" value="ECO:0007669"/>
    <property type="project" value="TreeGrafter"/>
</dbReference>
<dbReference type="GO" id="GO:0015288">
    <property type="term" value="F:porin activity"/>
    <property type="evidence" value="ECO:0007669"/>
    <property type="project" value="UniProtKB-KW"/>
</dbReference>
<dbReference type="GO" id="GO:0006811">
    <property type="term" value="P:monoatomic ion transport"/>
    <property type="evidence" value="ECO:0007669"/>
    <property type="project" value="UniProtKB-KW"/>
</dbReference>
<dbReference type="GO" id="GO:0015774">
    <property type="term" value="P:polysaccharide transport"/>
    <property type="evidence" value="ECO:0007669"/>
    <property type="project" value="TreeGrafter"/>
</dbReference>
<dbReference type="CDD" id="cd01346">
    <property type="entry name" value="Maltoporin-like"/>
    <property type="match status" value="1"/>
</dbReference>
<dbReference type="FunFam" id="2.40.170.10:FF:000002">
    <property type="entry name" value="Cryptic outer membrane porin BglH"/>
    <property type="match status" value="1"/>
</dbReference>
<dbReference type="Gene3D" id="2.40.170.10">
    <property type="entry name" value="Porin, LamB type"/>
    <property type="match status" value="1"/>
</dbReference>
<dbReference type="InterPro" id="IPR050286">
    <property type="entry name" value="G_neg_Bact_CarbUptk_Porin"/>
</dbReference>
<dbReference type="InterPro" id="IPR021570">
    <property type="entry name" value="LamB-type_porin_N_dom"/>
</dbReference>
<dbReference type="InterPro" id="IPR003192">
    <property type="entry name" value="Porin_LamB"/>
</dbReference>
<dbReference type="InterPro" id="IPR036998">
    <property type="entry name" value="Porin_LamB_sf"/>
</dbReference>
<dbReference type="PANTHER" id="PTHR38762">
    <property type="entry name" value="CRYPTIC OUTER MEMBRANE PORIN BGLH-RELATED"/>
    <property type="match status" value="1"/>
</dbReference>
<dbReference type="PANTHER" id="PTHR38762:SF1">
    <property type="entry name" value="CRYPTIC OUTER MEMBRANE PORIN BGLH-RELATED"/>
    <property type="match status" value="1"/>
</dbReference>
<dbReference type="Pfam" id="PF02264">
    <property type="entry name" value="LamB"/>
    <property type="match status" value="1"/>
</dbReference>
<dbReference type="Pfam" id="PF11471">
    <property type="entry name" value="Sugarporin_N"/>
    <property type="match status" value="1"/>
</dbReference>
<dbReference type="SUPFAM" id="SSF56935">
    <property type="entry name" value="Porins"/>
    <property type="match status" value="1"/>
</dbReference>
<keyword id="KW-0998">Cell outer membrane</keyword>
<keyword id="KW-0406">Ion transport</keyword>
<keyword id="KW-0472">Membrane</keyword>
<keyword id="KW-0626">Porin</keyword>
<keyword id="KW-0732">Signal</keyword>
<keyword id="KW-0812">Transmembrane</keyword>
<keyword id="KW-1134">Transmembrane beta strand</keyword>
<keyword id="KW-0813">Transport</keyword>